<sequence length="430" mass="46368">MAFEFRLPDIGEGIHEGEIVKWFVKAGDTIEEDDVLAEVQNDKSVVEIPSPVSGTVEEVMVEEGTVAVVGDVIVKIDAPDAEDMQFKGHDDDSSSKEEPAKEEAPAEQAPVATQTEEVDENRTVKAMPSVRKYAREKGVNIKAVSGSGKNGRITKEDVDAYLNGGAPTASNESAASATSEEVAETPAAPAAVSLEGDFPETTEKIPAMRRAIAKAMVNSKHTAPHVTLMDEIDVQALWDHRKKFKEIAAEQGTKLTFLPYVVKALVSALKKYPALNTSFNEEAGEIVHKHYWNIGIAADTDRGLLVPVVKHADRKSIFQISDEINELAVKARDGKLTADEMKGATCTISNIGSAGGQWFTPVINHPEVAILGIGRIAQKPIVKDGEIVAAPVLALSLSFDHRQIDGATGQNAMNHIKRLLNNPELLLMEG</sequence>
<keyword id="KW-0012">Acyltransferase</keyword>
<keyword id="KW-0450">Lipoyl</keyword>
<keyword id="KW-0808">Transferase</keyword>
<evidence type="ECO:0000250" key="1"/>
<evidence type="ECO:0000255" key="2"/>
<evidence type="ECO:0000255" key="3">
    <source>
        <dbReference type="PROSITE-ProRule" id="PRU01066"/>
    </source>
</evidence>
<evidence type="ECO:0000255" key="4">
    <source>
        <dbReference type="PROSITE-ProRule" id="PRU01170"/>
    </source>
</evidence>
<evidence type="ECO:0000256" key="5">
    <source>
        <dbReference type="SAM" id="MobiDB-lite"/>
    </source>
</evidence>
<evidence type="ECO:0000305" key="6"/>
<dbReference type="EC" id="2.3.1.12"/>
<dbReference type="EMBL" id="BA000018">
    <property type="protein sequence ID" value="BAB42191.1"/>
    <property type="molecule type" value="Genomic_DNA"/>
</dbReference>
<dbReference type="PIR" id="D89879">
    <property type="entry name" value="D89879"/>
</dbReference>
<dbReference type="RefSeq" id="WP_000863439.1">
    <property type="nucleotide sequence ID" value="NC_002745.2"/>
</dbReference>
<dbReference type="SMR" id="P65636"/>
<dbReference type="EnsemblBacteria" id="BAB42191">
    <property type="protein sequence ID" value="BAB42191"/>
    <property type="gene ID" value="BAB42191"/>
</dbReference>
<dbReference type="KEGG" id="sau:SA0945"/>
<dbReference type="HOGENOM" id="CLU_016733_10_0_9"/>
<dbReference type="GO" id="GO:0005737">
    <property type="term" value="C:cytoplasm"/>
    <property type="evidence" value="ECO:0007669"/>
    <property type="project" value="TreeGrafter"/>
</dbReference>
<dbReference type="GO" id="GO:0004742">
    <property type="term" value="F:dihydrolipoyllysine-residue acetyltransferase activity"/>
    <property type="evidence" value="ECO:0007669"/>
    <property type="project" value="UniProtKB-EC"/>
</dbReference>
<dbReference type="GO" id="GO:0031405">
    <property type="term" value="F:lipoic acid binding"/>
    <property type="evidence" value="ECO:0007669"/>
    <property type="project" value="TreeGrafter"/>
</dbReference>
<dbReference type="CDD" id="cd06849">
    <property type="entry name" value="lipoyl_domain"/>
    <property type="match status" value="1"/>
</dbReference>
<dbReference type="FunFam" id="3.30.559.10:FF:000007">
    <property type="entry name" value="Dihydrolipoamide acetyltransferase component of pyruvate dehydrogenase complex"/>
    <property type="match status" value="1"/>
</dbReference>
<dbReference type="FunFam" id="4.10.320.10:FF:000011">
    <property type="entry name" value="Dihydrolipoamide acetyltransferase component of pyruvate dehydrogenase complex"/>
    <property type="match status" value="1"/>
</dbReference>
<dbReference type="Gene3D" id="2.40.50.100">
    <property type="match status" value="1"/>
</dbReference>
<dbReference type="Gene3D" id="3.30.559.10">
    <property type="entry name" value="Chloramphenicol acetyltransferase-like domain"/>
    <property type="match status" value="1"/>
</dbReference>
<dbReference type="Gene3D" id="4.10.320.10">
    <property type="entry name" value="E3-binding domain"/>
    <property type="match status" value="1"/>
</dbReference>
<dbReference type="InterPro" id="IPR003016">
    <property type="entry name" value="2-oxoA_DH_lipoyl-BS"/>
</dbReference>
<dbReference type="InterPro" id="IPR001078">
    <property type="entry name" value="2-oxoacid_DH_actylTfrase"/>
</dbReference>
<dbReference type="InterPro" id="IPR050743">
    <property type="entry name" value="2-oxoacid_DH_E2_comp"/>
</dbReference>
<dbReference type="InterPro" id="IPR000089">
    <property type="entry name" value="Biotin_lipoyl"/>
</dbReference>
<dbReference type="InterPro" id="IPR023213">
    <property type="entry name" value="CAT-like_dom_sf"/>
</dbReference>
<dbReference type="InterPro" id="IPR036625">
    <property type="entry name" value="E3-bd_dom_sf"/>
</dbReference>
<dbReference type="InterPro" id="IPR004167">
    <property type="entry name" value="PSBD"/>
</dbReference>
<dbReference type="InterPro" id="IPR011053">
    <property type="entry name" value="Single_hybrid_motif"/>
</dbReference>
<dbReference type="PANTHER" id="PTHR43178">
    <property type="entry name" value="DIHYDROLIPOAMIDE ACETYLTRANSFERASE COMPONENT OF PYRUVATE DEHYDROGENASE COMPLEX"/>
    <property type="match status" value="1"/>
</dbReference>
<dbReference type="PANTHER" id="PTHR43178:SF5">
    <property type="entry name" value="LIPOAMIDE ACYLTRANSFERASE COMPONENT OF BRANCHED-CHAIN ALPHA-KETO ACID DEHYDROGENASE COMPLEX, MITOCHONDRIAL"/>
    <property type="match status" value="1"/>
</dbReference>
<dbReference type="Pfam" id="PF00198">
    <property type="entry name" value="2-oxoacid_dh"/>
    <property type="match status" value="1"/>
</dbReference>
<dbReference type="Pfam" id="PF00364">
    <property type="entry name" value="Biotin_lipoyl"/>
    <property type="match status" value="1"/>
</dbReference>
<dbReference type="Pfam" id="PF02817">
    <property type="entry name" value="E3_binding"/>
    <property type="match status" value="1"/>
</dbReference>
<dbReference type="SUPFAM" id="SSF52777">
    <property type="entry name" value="CoA-dependent acyltransferases"/>
    <property type="match status" value="1"/>
</dbReference>
<dbReference type="SUPFAM" id="SSF47005">
    <property type="entry name" value="Peripheral subunit-binding domain of 2-oxo acid dehydrogenase complex"/>
    <property type="match status" value="1"/>
</dbReference>
<dbReference type="SUPFAM" id="SSF51230">
    <property type="entry name" value="Single hybrid motif"/>
    <property type="match status" value="1"/>
</dbReference>
<dbReference type="PROSITE" id="PS50968">
    <property type="entry name" value="BIOTINYL_LIPOYL"/>
    <property type="match status" value="1"/>
</dbReference>
<dbReference type="PROSITE" id="PS00189">
    <property type="entry name" value="LIPOYL"/>
    <property type="match status" value="1"/>
</dbReference>
<dbReference type="PROSITE" id="PS51826">
    <property type="entry name" value="PSBD"/>
    <property type="match status" value="1"/>
</dbReference>
<gene>
    <name type="primary">pdhC</name>
    <name type="ordered locus">SA0945</name>
</gene>
<feature type="chain" id="PRO_0000162289" description="Dihydrolipoyllysine-residue acetyltransferase component of pyruvate dehydrogenase complex">
    <location>
        <begin position="1"/>
        <end position="430"/>
    </location>
</feature>
<feature type="domain" description="Lipoyl-binding" evidence="3">
    <location>
        <begin position="2"/>
        <end position="77"/>
    </location>
</feature>
<feature type="domain" description="Peripheral subunit-binding (PSBD)" evidence="4">
    <location>
        <begin position="125"/>
        <end position="162"/>
    </location>
</feature>
<feature type="region of interest" description="Disordered" evidence="5">
    <location>
        <begin position="80"/>
        <end position="122"/>
    </location>
</feature>
<feature type="region of interest" description="Disordered" evidence="5">
    <location>
        <begin position="164"/>
        <end position="199"/>
    </location>
</feature>
<feature type="compositionally biased region" description="Basic and acidic residues" evidence="5">
    <location>
        <begin position="84"/>
        <end position="104"/>
    </location>
</feature>
<feature type="compositionally biased region" description="Low complexity" evidence="5">
    <location>
        <begin position="166"/>
        <end position="193"/>
    </location>
</feature>
<feature type="active site" evidence="2">
    <location>
        <position position="401"/>
    </location>
</feature>
<feature type="modified residue" description="N6-lipoyllysine" evidence="1 3">
    <location>
        <position position="43"/>
    </location>
</feature>
<protein>
    <recommendedName>
        <fullName>Dihydrolipoyllysine-residue acetyltransferase component of pyruvate dehydrogenase complex</fullName>
        <ecNumber>2.3.1.12</ecNumber>
    </recommendedName>
    <alternativeName>
        <fullName>Dihydrolipoamide acetyltransferase component of pyruvate dehydrogenase complex</fullName>
    </alternativeName>
    <alternativeName>
        <fullName>E2</fullName>
    </alternativeName>
</protein>
<name>ODP2_STAAN</name>
<organism>
    <name type="scientific">Staphylococcus aureus (strain N315)</name>
    <dbReference type="NCBI Taxonomy" id="158879"/>
    <lineage>
        <taxon>Bacteria</taxon>
        <taxon>Bacillati</taxon>
        <taxon>Bacillota</taxon>
        <taxon>Bacilli</taxon>
        <taxon>Bacillales</taxon>
        <taxon>Staphylococcaceae</taxon>
        <taxon>Staphylococcus</taxon>
    </lineage>
</organism>
<comment type="function">
    <text>The pyruvate dehydrogenase complex catalyzes the overall conversion of pyruvate to acetyl-CoA and CO(2). It contains multiple copies of three enzymatic components: pyruvate dehydrogenase (E1), dihydrolipoamide acetyltransferase (E2) and lipoamide dehydrogenase (E3).</text>
</comment>
<comment type="catalytic activity">
    <reaction>
        <text>N(6)-[(R)-dihydrolipoyl]-L-lysyl-[protein] + acetyl-CoA = N(6)-[(R)-S(8)-acetyldihydrolipoyl]-L-lysyl-[protein] + CoA</text>
        <dbReference type="Rhea" id="RHEA:17017"/>
        <dbReference type="Rhea" id="RHEA-COMP:10475"/>
        <dbReference type="Rhea" id="RHEA-COMP:10478"/>
        <dbReference type="ChEBI" id="CHEBI:57287"/>
        <dbReference type="ChEBI" id="CHEBI:57288"/>
        <dbReference type="ChEBI" id="CHEBI:83100"/>
        <dbReference type="ChEBI" id="CHEBI:83111"/>
        <dbReference type="EC" id="2.3.1.12"/>
    </reaction>
</comment>
<comment type="cofactor">
    <cofactor evidence="1">
        <name>(R)-lipoate</name>
        <dbReference type="ChEBI" id="CHEBI:83088"/>
    </cofactor>
    <text evidence="1">Binds 1 lipoyl cofactor covalently.</text>
</comment>
<comment type="subunit">
    <text evidence="1">Forms a 24-polypeptide structural core with octahedral symmetry.</text>
</comment>
<comment type="similarity">
    <text evidence="6">Belongs to the 2-oxoacid dehydrogenase family.</text>
</comment>
<proteinExistence type="evidence at protein level"/>
<accession>P65636</accession>
<accession>Q99V06</accession>
<reference key="1">
    <citation type="journal article" date="2001" name="Lancet">
        <title>Whole genome sequencing of meticillin-resistant Staphylococcus aureus.</title>
        <authorList>
            <person name="Kuroda M."/>
            <person name="Ohta T."/>
            <person name="Uchiyama I."/>
            <person name="Baba T."/>
            <person name="Yuzawa H."/>
            <person name="Kobayashi I."/>
            <person name="Cui L."/>
            <person name="Oguchi A."/>
            <person name="Aoki K."/>
            <person name="Nagai Y."/>
            <person name="Lian J.-Q."/>
            <person name="Ito T."/>
            <person name="Kanamori M."/>
            <person name="Matsumaru H."/>
            <person name="Maruyama A."/>
            <person name="Murakami H."/>
            <person name="Hosoyama A."/>
            <person name="Mizutani-Ui Y."/>
            <person name="Takahashi N.K."/>
            <person name="Sawano T."/>
            <person name="Inoue R."/>
            <person name="Kaito C."/>
            <person name="Sekimizu K."/>
            <person name="Hirakawa H."/>
            <person name="Kuhara S."/>
            <person name="Goto S."/>
            <person name="Yabuzaki J."/>
            <person name="Kanehisa M."/>
            <person name="Yamashita A."/>
            <person name="Oshima K."/>
            <person name="Furuya K."/>
            <person name="Yoshino C."/>
            <person name="Shiba T."/>
            <person name="Hattori M."/>
            <person name="Ogasawara N."/>
            <person name="Hayashi H."/>
            <person name="Hiramatsu K."/>
        </authorList>
    </citation>
    <scope>NUCLEOTIDE SEQUENCE [LARGE SCALE GENOMIC DNA]</scope>
    <source>
        <strain>N315</strain>
    </source>
</reference>
<reference key="2">
    <citation type="submission" date="2007-10" db="UniProtKB">
        <title>Shotgun proteomic analysis of total and membrane protein extracts of S. aureus strain N315.</title>
        <authorList>
            <person name="Vaezzadeh A.R."/>
            <person name="Deshusses J."/>
            <person name="Lescuyer P."/>
            <person name="Hochstrasser D.F."/>
        </authorList>
    </citation>
    <scope>IDENTIFICATION BY MASS SPECTROMETRY [LARGE SCALE ANALYSIS]</scope>
    <source>
        <strain>N315</strain>
    </source>
</reference>